<protein>
    <recommendedName>
        <fullName evidence="5">Renin</fullName>
        <ecNumber evidence="1">3.4.23.15</ecNumber>
    </recommendedName>
    <alternativeName>
        <fullName>Angiotensinogenase</fullName>
    </alternativeName>
</protein>
<comment type="function">
    <text evidence="1">Renin is a highly specific endopeptidase, whose only known function is to generate angiotensin I from angiotensinogen in the plasma, initiating a cascade of reactions that produce an elevation of blood pressure and increased sodium retention by the kidney.</text>
</comment>
<comment type="catalytic activity">
    <reaction evidence="1">
        <text>Cleavage of Leu-|-Xaa bond in angiotensinogen to generate angiotensin I.</text>
        <dbReference type="EC" id="3.4.23.15"/>
    </reaction>
</comment>
<comment type="activity regulation">
    <text evidence="1">Interaction with ATP6AP2 results in a 5-fold increased efficiency in angiotensinogen processing.</text>
</comment>
<comment type="subunit">
    <text evidence="1">Interacts with ATP6AP2.</text>
</comment>
<comment type="subcellular location">
    <subcellularLocation>
        <location evidence="1">Secreted</location>
    </subcellularLocation>
    <subcellularLocation>
        <location evidence="1">Membrane</location>
    </subcellularLocation>
    <text evidence="1">Associated to membranes via binding to ATP6AP2.</text>
</comment>
<comment type="similarity">
    <text evidence="6">Belongs to the peptidase A1 family.</text>
</comment>
<accession>Q6DLW5</accession>
<feature type="signal peptide" evidence="1">
    <location>
        <begin position="1"/>
        <end position="23"/>
    </location>
</feature>
<feature type="propeptide" id="PRO_0000026085" description="Activation peptide" evidence="1">
    <location>
        <begin position="24"/>
        <end position="66"/>
    </location>
</feature>
<feature type="chain" id="PRO_0000026086" description="Renin">
    <location>
        <begin position="67"/>
        <end position="406"/>
    </location>
</feature>
<feature type="domain" description="Peptidase A1" evidence="3">
    <location>
        <begin position="86"/>
        <end position="403"/>
    </location>
</feature>
<feature type="active site" evidence="4">
    <location>
        <position position="104"/>
    </location>
</feature>
<feature type="active site" evidence="4">
    <location>
        <position position="292"/>
    </location>
</feature>
<feature type="glycosylation site" description="N-linked (GlcNAc...) asparagine" evidence="2">
    <location>
        <position position="71"/>
    </location>
</feature>
<feature type="glycosylation site" description="N-linked (GlcNAc...) asparagine" evidence="2">
    <location>
        <position position="141"/>
    </location>
</feature>
<feature type="disulfide bond" evidence="1">
    <location>
        <begin position="117"/>
        <end position="124"/>
    </location>
</feature>
<feature type="disulfide bond" evidence="1">
    <location>
        <begin position="283"/>
        <end position="287"/>
    </location>
</feature>
<feature type="disulfide bond" evidence="1">
    <location>
        <begin position="325"/>
        <end position="362"/>
    </location>
</feature>
<proteinExistence type="evidence at transcript level"/>
<dbReference type="EC" id="3.4.23.15" evidence="1"/>
<dbReference type="EMBL" id="AY662332">
    <property type="protein sequence ID" value="AAT74864.2"/>
    <property type="molecule type" value="mRNA"/>
</dbReference>
<dbReference type="RefSeq" id="NP_001028088.1">
    <property type="nucleotide sequence ID" value="NM_001032916.1"/>
</dbReference>
<dbReference type="SMR" id="Q6DLW5"/>
<dbReference type="FunCoup" id="Q6DLW5">
    <property type="interactions" value="51"/>
</dbReference>
<dbReference type="STRING" id="9544.ENSMMUP00000011105"/>
<dbReference type="BindingDB" id="Q6DLW5"/>
<dbReference type="ChEMBL" id="CHEMBL1287631"/>
<dbReference type="DrugCentral" id="Q6DLW5"/>
<dbReference type="MEROPS" id="A01.007"/>
<dbReference type="GlyCosmos" id="Q6DLW5">
    <property type="glycosylation" value="2 sites, No reported glycans"/>
</dbReference>
<dbReference type="PaxDb" id="9544-ENSMMUP00000011102"/>
<dbReference type="GeneID" id="574299"/>
<dbReference type="KEGG" id="mcc:574299"/>
<dbReference type="CTD" id="5972"/>
<dbReference type="eggNOG" id="KOG1339">
    <property type="taxonomic scope" value="Eukaryota"/>
</dbReference>
<dbReference type="InParanoid" id="Q6DLW5"/>
<dbReference type="OrthoDB" id="771136at2759"/>
<dbReference type="Proteomes" id="UP000006718">
    <property type="component" value="Unassembled WGS sequence"/>
</dbReference>
<dbReference type="GO" id="GO:0005615">
    <property type="term" value="C:extracellular space"/>
    <property type="evidence" value="ECO:0000318"/>
    <property type="project" value="GO_Central"/>
</dbReference>
<dbReference type="GO" id="GO:0016020">
    <property type="term" value="C:membrane"/>
    <property type="evidence" value="ECO:0007669"/>
    <property type="project" value="UniProtKB-SubCell"/>
</dbReference>
<dbReference type="GO" id="GO:0004190">
    <property type="term" value="F:aspartic-type endopeptidase activity"/>
    <property type="evidence" value="ECO:0000318"/>
    <property type="project" value="GO_Central"/>
</dbReference>
<dbReference type="GO" id="GO:0002003">
    <property type="term" value="P:angiotensin maturation"/>
    <property type="evidence" value="ECO:0000318"/>
    <property type="project" value="GO_Central"/>
</dbReference>
<dbReference type="CDD" id="cd05487">
    <property type="entry name" value="renin_like"/>
    <property type="match status" value="1"/>
</dbReference>
<dbReference type="FunFam" id="2.40.70.10:FF:000037">
    <property type="entry name" value="Renin"/>
    <property type="match status" value="1"/>
</dbReference>
<dbReference type="FunFam" id="2.40.70.10:FF:000032">
    <property type="entry name" value="renin"/>
    <property type="match status" value="1"/>
</dbReference>
<dbReference type="Gene3D" id="2.40.70.10">
    <property type="entry name" value="Acid Proteases"/>
    <property type="match status" value="2"/>
</dbReference>
<dbReference type="InterPro" id="IPR001461">
    <property type="entry name" value="Aspartic_peptidase_A1"/>
</dbReference>
<dbReference type="InterPro" id="IPR001969">
    <property type="entry name" value="Aspartic_peptidase_AS"/>
</dbReference>
<dbReference type="InterPro" id="IPR012848">
    <property type="entry name" value="Aspartic_peptidase_N"/>
</dbReference>
<dbReference type="InterPro" id="IPR033121">
    <property type="entry name" value="PEPTIDASE_A1"/>
</dbReference>
<dbReference type="InterPro" id="IPR021109">
    <property type="entry name" value="Peptidase_aspartic_dom_sf"/>
</dbReference>
<dbReference type="InterPro" id="IPR034135">
    <property type="entry name" value="Renin-like_dom"/>
</dbReference>
<dbReference type="PANTHER" id="PTHR47966">
    <property type="entry name" value="BETA-SITE APP-CLEAVING ENZYME, ISOFORM A-RELATED"/>
    <property type="match status" value="1"/>
</dbReference>
<dbReference type="PANTHER" id="PTHR47966:SF24">
    <property type="entry name" value="RENIN"/>
    <property type="match status" value="1"/>
</dbReference>
<dbReference type="Pfam" id="PF07966">
    <property type="entry name" value="A1_Propeptide"/>
    <property type="match status" value="1"/>
</dbReference>
<dbReference type="Pfam" id="PF00026">
    <property type="entry name" value="Asp"/>
    <property type="match status" value="1"/>
</dbReference>
<dbReference type="PRINTS" id="PR00792">
    <property type="entry name" value="PEPSIN"/>
</dbReference>
<dbReference type="SUPFAM" id="SSF50630">
    <property type="entry name" value="Acid proteases"/>
    <property type="match status" value="1"/>
</dbReference>
<dbReference type="PROSITE" id="PS00141">
    <property type="entry name" value="ASP_PROTEASE"/>
    <property type="match status" value="2"/>
</dbReference>
<dbReference type="PROSITE" id="PS51767">
    <property type="entry name" value="PEPTIDASE_A1"/>
    <property type="match status" value="1"/>
</dbReference>
<name>RENI_MACMU</name>
<organism>
    <name type="scientific">Macaca mulatta</name>
    <name type="common">Rhesus macaque</name>
    <dbReference type="NCBI Taxonomy" id="9544"/>
    <lineage>
        <taxon>Eukaryota</taxon>
        <taxon>Metazoa</taxon>
        <taxon>Chordata</taxon>
        <taxon>Craniata</taxon>
        <taxon>Vertebrata</taxon>
        <taxon>Euteleostomi</taxon>
        <taxon>Mammalia</taxon>
        <taxon>Eutheria</taxon>
        <taxon>Euarchontoglires</taxon>
        <taxon>Primates</taxon>
        <taxon>Haplorrhini</taxon>
        <taxon>Catarrhini</taxon>
        <taxon>Cercopithecidae</taxon>
        <taxon>Cercopithecinae</taxon>
        <taxon>Macaca</taxon>
    </lineage>
</organism>
<keyword id="KW-0064">Aspartyl protease</keyword>
<keyword id="KW-0165">Cleavage on pair of basic residues</keyword>
<keyword id="KW-1015">Disulfide bond</keyword>
<keyword id="KW-0325">Glycoprotein</keyword>
<keyword id="KW-0378">Hydrolase</keyword>
<keyword id="KW-0472">Membrane</keyword>
<keyword id="KW-0645">Protease</keyword>
<keyword id="KW-1185">Reference proteome</keyword>
<keyword id="KW-0964">Secreted</keyword>
<keyword id="KW-0732">Signal</keyword>
<keyword id="KW-0865">Zymogen</keyword>
<reference key="1">
    <citation type="submission" date="2005-03" db="EMBL/GenBank/DDBJ databases">
        <title>Cloning and biochemical characterization of the rhesus renin precursor protein.</title>
        <authorList>
            <person name="Atkins C.L."/>
            <person name="Lucas B.J."/>
            <person name="Lewis S.D."/>
            <person name="Yuan J."/>
            <person name="Hershey J.C."/>
            <person name="Feuerstein G.Z."/>
        </authorList>
    </citation>
    <scope>NUCLEOTIDE SEQUENCE [MRNA]</scope>
</reference>
<evidence type="ECO:0000250" key="1">
    <source>
        <dbReference type="UniProtKB" id="P00797"/>
    </source>
</evidence>
<evidence type="ECO:0000255" key="2"/>
<evidence type="ECO:0000255" key="3">
    <source>
        <dbReference type="PROSITE-ProRule" id="PRU01103"/>
    </source>
</evidence>
<evidence type="ECO:0000255" key="4">
    <source>
        <dbReference type="PROSITE-ProRule" id="PRU10094"/>
    </source>
</evidence>
<evidence type="ECO:0000303" key="5">
    <source ref="1"/>
</evidence>
<evidence type="ECO:0000305" key="6"/>
<sequence>MDGWRRMPRWGLLLLLWGSCTFGLPTDTTTFKRIFLKRMPSIRESLKERGVDMARLGPEWSQPMKRLALGNTTSSVILTNYMDTQYYGEIGIGTPPQTFKVVFDTGSSNVWVPSSKCSRLYTACVYHKLFDASDSSSYKHNGTELTLRYSTGTVSGFLSQDIITVGGITVTQMFGEVTEMPALPFMLAEFDGVVGMGFIEQAIGRVTPIFDNILSQGVLKEDVFSFYYNRDSENAQSLGGQIVLGGSDPQHYEGNFHYINLIKTGVWQIPMKGVSVGSSTLLCEDGCLALVDTGASYISGSTSSIEKLMEALGAKKRLFDYVVKCNEGPTLPDISFHLGGKEYTLTSADYVFQESYSSKKLCTLAIHAMDIPPPTGPTWALGATFIRKFYTEFDRRNNRIGFALAH</sequence>
<gene>
    <name type="primary">REN</name>
</gene>